<comment type="function">
    <text evidence="1">Nucleoside triphosphate pyrophosphatase that hydrolyzes dTTP and UTP. May have a dual role in cell division arrest and in preventing the incorporation of modified nucleotides into cellular nucleic acids.</text>
</comment>
<comment type="catalytic activity">
    <reaction evidence="1">
        <text>dTTP + H2O = dTMP + diphosphate + H(+)</text>
        <dbReference type="Rhea" id="RHEA:28534"/>
        <dbReference type="ChEBI" id="CHEBI:15377"/>
        <dbReference type="ChEBI" id="CHEBI:15378"/>
        <dbReference type="ChEBI" id="CHEBI:33019"/>
        <dbReference type="ChEBI" id="CHEBI:37568"/>
        <dbReference type="ChEBI" id="CHEBI:63528"/>
        <dbReference type="EC" id="3.6.1.9"/>
    </reaction>
</comment>
<comment type="catalytic activity">
    <reaction evidence="1">
        <text>UTP + H2O = UMP + diphosphate + H(+)</text>
        <dbReference type="Rhea" id="RHEA:29395"/>
        <dbReference type="ChEBI" id="CHEBI:15377"/>
        <dbReference type="ChEBI" id="CHEBI:15378"/>
        <dbReference type="ChEBI" id="CHEBI:33019"/>
        <dbReference type="ChEBI" id="CHEBI:46398"/>
        <dbReference type="ChEBI" id="CHEBI:57865"/>
        <dbReference type="EC" id="3.6.1.9"/>
    </reaction>
</comment>
<comment type="cofactor">
    <cofactor evidence="1">
        <name>a divalent metal cation</name>
        <dbReference type="ChEBI" id="CHEBI:60240"/>
    </cofactor>
</comment>
<comment type="subcellular location">
    <subcellularLocation>
        <location evidence="1">Cytoplasm</location>
    </subcellularLocation>
</comment>
<comment type="similarity">
    <text evidence="1">Belongs to the Maf family. YhdE subfamily.</text>
</comment>
<feature type="chain" id="PRO_1000127769" description="dTTP/UTP pyrophosphatase">
    <location>
        <begin position="1"/>
        <end position="191"/>
    </location>
</feature>
<feature type="active site" description="Proton acceptor" evidence="1">
    <location>
        <position position="69"/>
    </location>
</feature>
<feature type="site" description="Important for substrate specificity" evidence="1">
    <location>
        <position position="12"/>
    </location>
</feature>
<feature type="site" description="Important for substrate specificity" evidence="1">
    <location>
        <position position="70"/>
    </location>
</feature>
<feature type="site" description="Important for substrate specificity" evidence="1">
    <location>
        <position position="152"/>
    </location>
</feature>
<name>NTPPA_BACC0</name>
<accession>B7JQ48</accession>
<organism>
    <name type="scientific">Bacillus cereus (strain AH820)</name>
    <dbReference type="NCBI Taxonomy" id="405535"/>
    <lineage>
        <taxon>Bacteria</taxon>
        <taxon>Bacillati</taxon>
        <taxon>Bacillota</taxon>
        <taxon>Bacilli</taxon>
        <taxon>Bacillales</taxon>
        <taxon>Bacillaceae</taxon>
        <taxon>Bacillus</taxon>
        <taxon>Bacillus cereus group</taxon>
    </lineage>
</organism>
<proteinExistence type="inferred from homology"/>
<keyword id="KW-0963">Cytoplasm</keyword>
<keyword id="KW-0378">Hydrolase</keyword>
<keyword id="KW-0546">Nucleotide metabolism</keyword>
<protein>
    <recommendedName>
        <fullName evidence="1">dTTP/UTP pyrophosphatase</fullName>
        <shortName evidence="1">dTTPase/UTPase</shortName>
        <ecNumber evidence="1">3.6.1.9</ecNumber>
    </recommendedName>
    <alternativeName>
        <fullName evidence="1">Nucleoside triphosphate pyrophosphatase</fullName>
    </alternativeName>
    <alternativeName>
        <fullName evidence="1">Nucleotide pyrophosphatase</fullName>
        <shortName evidence="1">Nucleotide PPase</shortName>
    </alternativeName>
</protein>
<gene>
    <name type="primary">maf</name>
    <name type="ordered locus">BCAH820_4542</name>
</gene>
<evidence type="ECO:0000255" key="1">
    <source>
        <dbReference type="HAMAP-Rule" id="MF_00528"/>
    </source>
</evidence>
<sequence>MRKIILASGSPRRKELLELAGVPFEIIVSEVEETIGAYSSPSDIVMSLALQKASAVAENNSDHIVLGADTIVTYESRILGKPSNEAEAKEMLQLLSGKTHEVYTGVAIIAKDKTVTFYERTEVTFWELTEEEIDAYVASKEPLDKAGSYGIQGKGSIFVQHIQGDYYSVVGLPISRLVRELKQFNIDVTHA</sequence>
<reference key="1">
    <citation type="submission" date="2008-10" db="EMBL/GenBank/DDBJ databases">
        <title>Genome sequence of Bacillus cereus AH820.</title>
        <authorList>
            <person name="Dodson R.J."/>
            <person name="Durkin A.S."/>
            <person name="Rosovitz M.J."/>
            <person name="Rasko D.A."/>
            <person name="Hoffmaster A."/>
            <person name="Ravel J."/>
            <person name="Sutton G."/>
        </authorList>
    </citation>
    <scope>NUCLEOTIDE SEQUENCE [LARGE SCALE GENOMIC DNA]</scope>
    <source>
        <strain>AH820</strain>
    </source>
</reference>
<dbReference type="EC" id="3.6.1.9" evidence="1"/>
<dbReference type="EMBL" id="CP001283">
    <property type="protein sequence ID" value="ACK89599.1"/>
    <property type="molecule type" value="Genomic_DNA"/>
</dbReference>
<dbReference type="RefSeq" id="WP_001226272.1">
    <property type="nucleotide sequence ID" value="NC_011773.1"/>
</dbReference>
<dbReference type="SMR" id="B7JQ48"/>
<dbReference type="KEGG" id="bcu:BCAH820_4542"/>
<dbReference type="HOGENOM" id="CLU_040416_0_0_9"/>
<dbReference type="Proteomes" id="UP000001363">
    <property type="component" value="Chromosome"/>
</dbReference>
<dbReference type="GO" id="GO:0005737">
    <property type="term" value="C:cytoplasm"/>
    <property type="evidence" value="ECO:0007669"/>
    <property type="project" value="UniProtKB-SubCell"/>
</dbReference>
<dbReference type="GO" id="GO:0036218">
    <property type="term" value="F:dTTP diphosphatase activity"/>
    <property type="evidence" value="ECO:0007669"/>
    <property type="project" value="RHEA"/>
</dbReference>
<dbReference type="GO" id="GO:0036221">
    <property type="term" value="F:UTP diphosphatase activity"/>
    <property type="evidence" value="ECO:0007669"/>
    <property type="project" value="RHEA"/>
</dbReference>
<dbReference type="GO" id="GO:0009117">
    <property type="term" value="P:nucleotide metabolic process"/>
    <property type="evidence" value="ECO:0007669"/>
    <property type="project" value="UniProtKB-KW"/>
</dbReference>
<dbReference type="CDD" id="cd00555">
    <property type="entry name" value="Maf"/>
    <property type="match status" value="1"/>
</dbReference>
<dbReference type="FunFam" id="3.90.950.10:FF:000007">
    <property type="entry name" value="dTTP/UTP pyrophosphatase"/>
    <property type="match status" value="1"/>
</dbReference>
<dbReference type="Gene3D" id="3.90.950.10">
    <property type="match status" value="1"/>
</dbReference>
<dbReference type="HAMAP" id="MF_00528">
    <property type="entry name" value="Maf"/>
    <property type="match status" value="1"/>
</dbReference>
<dbReference type="InterPro" id="IPR029001">
    <property type="entry name" value="ITPase-like_fam"/>
</dbReference>
<dbReference type="InterPro" id="IPR003697">
    <property type="entry name" value="Maf-like"/>
</dbReference>
<dbReference type="NCBIfam" id="TIGR00172">
    <property type="entry name" value="maf"/>
    <property type="match status" value="1"/>
</dbReference>
<dbReference type="PANTHER" id="PTHR43213">
    <property type="entry name" value="BIFUNCTIONAL DTTP/UTP PYROPHOSPHATASE/METHYLTRANSFERASE PROTEIN-RELATED"/>
    <property type="match status" value="1"/>
</dbReference>
<dbReference type="PANTHER" id="PTHR43213:SF5">
    <property type="entry name" value="BIFUNCTIONAL DTTP_UTP PYROPHOSPHATASE_METHYLTRANSFERASE PROTEIN-RELATED"/>
    <property type="match status" value="1"/>
</dbReference>
<dbReference type="Pfam" id="PF02545">
    <property type="entry name" value="Maf"/>
    <property type="match status" value="1"/>
</dbReference>
<dbReference type="PIRSF" id="PIRSF006305">
    <property type="entry name" value="Maf"/>
    <property type="match status" value="1"/>
</dbReference>
<dbReference type="SUPFAM" id="SSF52972">
    <property type="entry name" value="ITPase-like"/>
    <property type="match status" value="1"/>
</dbReference>